<dbReference type="EMBL" id="M15101">
    <property type="protein sequence ID" value="AAA29537.1"/>
    <property type="molecule type" value="Genomic_DNA"/>
</dbReference>
<dbReference type="PIR" id="A26255">
    <property type="entry name" value="OZZQAL"/>
</dbReference>
<dbReference type="SMR" id="P08675"/>
<dbReference type="GlyCosmos" id="P08675">
    <property type="glycosylation" value="1 site, No reported glycans"/>
</dbReference>
<dbReference type="GO" id="GO:0009986">
    <property type="term" value="C:cell surface"/>
    <property type="evidence" value="ECO:0007669"/>
    <property type="project" value="InterPro"/>
</dbReference>
<dbReference type="GO" id="GO:0005737">
    <property type="term" value="C:cytoplasm"/>
    <property type="evidence" value="ECO:0007669"/>
    <property type="project" value="UniProtKB-SubCell"/>
</dbReference>
<dbReference type="GO" id="GO:0005886">
    <property type="term" value="C:plasma membrane"/>
    <property type="evidence" value="ECO:0007669"/>
    <property type="project" value="UniProtKB-SubCell"/>
</dbReference>
<dbReference type="GO" id="GO:0098552">
    <property type="term" value="C:side of membrane"/>
    <property type="evidence" value="ECO:0007669"/>
    <property type="project" value="UniProtKB-KW"/>
</dbReference>
<dbReference type="Gene3D" id="2.20.100.10">
    <property type="entry name" value="Thrombospondin type-1 (TSP1) repeat"/>
    <property type="match status" value="1"/>
</dbReference>
<dbReference type="InterPro" id="IPR003067">
    <property type="entry name" value="Crcmsprzoite"/>
</dbReference>
<dbReference type="InterPro" id="IPR000884">
    <property type="entry name" value="TSP1_rpt"/>
</dbReference>
<dbReference type="InterPro" id="IPR036383">
    <property type="entry name" value="TSP1_rpt_sf"/>
</dbReference>
<dbReference type="Pfam" id="PF00090">
    <property type="entry name" value="TSP_1"/>
    <property type="match status" value="1"/>
</dbReference>
<dbReference type="PRINTS" id="PR01303">
    <property type="entry name" value="CRCMSPRZOITE"/>
</dbReference>
<dbReference type="SMART" id="SM00209">
    <property type="entry name" value="TSP1"/>
    <property type="match status" value="1"/>
</dbReference>
<dbReference type="SUPFAM" id="SSF82895">
    <property type="entry name" value="TSP-1 type 1 repeat"/>
    <property type="match status" value="1"/>
</dbReference>
<dbReference type="PROSITE" id="PS50092">
    <property type="entry name" value="TSP1"/>
    <property type="match status" value="1"/>
</dbReference>
<evidence type="ECO:0000250" key="1">
    <source>
        <dbReference type="UniProtKB" id="P02893"/>
    </source>
</evidence>
<evidence type="ECO:0000250" key="2">
    <source>
        <dbReference type="UniProtKB" id="P19597"/>
    </source>
</evidence>
<evidence type="ECO:0000250" key="3">
    <source>
        <dbReference type="UniProtKB" id="P23093"/>
    </source>
</evidence>
<evidence type="ECO:0000250" key="4">
    <source>
        <dbReference type="UniProtKB" id="Q7K740"/>
    </source>
</evidence>
<evidence type="ECO:0000255" key="5"/>
<evidence type="ECO:0000255" key="6">
    <source>
        <dbReference type="PROSITE-ProRule" id="PRU00210"/>
    </source>
</evidence>
<evidence type="ECO:0000256" key="7">
    <source>
        <dbReference type="SAM" id="MobiDB-lite"/>
    </source>
</evidence>
<evidence type="ECO:0000269" key="8">
    <source>
    </source>
</evidence>
<evidence type="ECO:0000303" key="9">
    <source>
    </source>
</evidence>
<evidence type="ECO:0000305" key="10"/>
<evidence type="ECO:0000305" key="11">
    <source>
    </source>
</evidence>
<sequence>MKNFNLLAVSSILLVDLFPTHCGHNVDLSRAINLNGVSFNNVDASSLGAAQVRQSASRGRGLGENPKNEEGADKQKKDEKKVEPKKPRENKLKQPPPADGARAEDGARAEDGARAEDGARAEDGARAADGARAADGARAADGARAEDGARAEDGARAEDGARAADGARAADGARAADGARAADGARAADGARAADGARAADGARAEDGAPAGNREGGQAGAGGNQAGGQAGAGGNQAGGQAGAGGNQAGGQAGAGGNQAGGQAGAGGNRAGGQAGAGDAGAGQGQNNEGANMPNAKLVKEYLDKIRSTIGVEWSPCTVTCGKGVRMRRKVSAANKKPEELDVNDLETEVCTMDKCAGIFNVVSNSLGLVILLVLALFN</sequence>
<proteinExistence type="inferred from homology"/>
<reference key="1">
    <citation type="journal article" date="1987" name="Cell">
        <title>The circumsporozoite gene of the Plasmodium cynomolgi complex.</title>
        <authorList>
            <person name="Galinski M.R."/>
            <person name="Arnot D.E."/>
            <person name="Cochrane A.H."/>
            <person name="Barnwell J.W."/>
            <person name="Nussenzweig R.S."/>
            <person name="Enea V."/>
        </authorList>
    </citation>
    <scope>NUCLEOTIDE SEQUENCE [GENOMIC DNA]</scope>
    <scope>POLYMORPHISM</scope>
    <scope>REPEATS</scope>
</reference>
<accession>P08675</accession>
<keyword id="KW-1003">Cell membrane</keyword>
<keyword id="KW-0963">Cytoplasm</keyword>
<keyword id="KW-1015">Disulfide bond</keyword>
<keyword id="KW-0325">Glycoprotein</keyword>
<keyword id="KW-0336">GPI-anchor</keyword>
<keyword id="KW-0449">Lipoprotein</keyword>
<keyword id="KW-0461">Malaria</keyword>
<keyword id="KW-0472">Membrane</keyword>
<keyword id="KW-0677">Repeat</keyword>
<keyword id="KW-0732">Signal</keyword>
<keyword id="KW-0748">Sporozoite</keyword>
<organism>
    <name type="scientific">Plasmodium cynomolgi (strain London)</name>
    <dbReference type="NCBI Taxonomy" id="5831"/>
    <lineage>
        <taxon>Eukaryota</taxon>
        <taxon>Sar</taxon>
        <taxon>Alveolata</taxon>
        <taxon>Apicomplexa</taxon>
        <taxon>Aconoidasida</taxon>
        <taxon>Haemosporida</taxon>
        <taxon>Plasmodiidae</taxon>
        <taxon>Plasmodium</taxon>
        <taxon>Plasmodium (Plasmodium)</taxon>
    </lineage>
</organism>
<gene>
    <name evidence="3" type="primary">CSP</name>
</gene>
<name>CSP_PLACL</name>
<comment type="function">
    <text evidence="1 3">Essential sporozoite protein (By similarity). In the mosquito vector, required for sporozoite development in the oocyst, migration through the vector hemolymph and entry into the vector salivary glands (By similarity). In the vertebrate host, required for sporozoite migration through the host dermis and infection of host hepatocytes (By similarity). Binds to highly sulfated heparan sulfate proteoglycans (HSPGs) on the surface of host hepatocytes (By similarity).</text>
</comment>
<comment type="function">
    <molecule>Circumsporozoite protein C-terminus</molecule>
    <text evidence="3">In the vertebrate host, binds to highly sulfated heparan sulfate proteoglycans (HSPGs) on the surface of host hepatocytes and is required for sporozoite invasion of the host hepatocytes.</text>
</comment>
<comment type="subcellular location">
    <subcellularLocation>
        <location evidence="2">Cell membrane</location>
        <topology evidence="5">Lipid-anchor</topology>
        <topology evidence="5">GPI-anchor</topology>
    </subcellularLocation>
    <subcellularLocation>
        <location evidence="3">Cytoplasm</location>
    </subcellularLocation>
    <text evidence="3">Localizes to the cytoplasm and the cell membrane in oocysts at day 6 post infection and then gradually distributes over the entire cell surface of the sporoblast and the budding sporozoites.</text>
</comment>
<comment type="domain">
    <text evidence="3 4">The N-terminus is involved in the initial binding to heparan sulfate proteoglycans (HSPGs) on the surface of host hepatocytes (By similarity). The N-terminus masks the TSP type-1 (TSR) domain which maintains the sporozoites in a migratory state, enabling them to complete their journey to the salivary gland in the mosquito vector and then to the host liver. The unmasking of the TSP type-1 (TSR) domain when the sporozoite interacts with the host hepatocyte also protects sporozoites from host antibodies (By similarity).</text>
</comment>
<comment type="domain">
    <text evidence="3">The TSP type-1 (TSR) domain is required for sporozoite development and invasion. CSP has two conformational states, an adhesive conformation in which the TSP type-1 (TSR) domain is exposed and a nonadhesive conformation in which the TSR is masked by the N-terminus. TSR-exposed conformation occurs during sporozoite development in the oocyst in the mosquito vector and during host hepatocyte invasion. TSR-masked conformation occurs during sporozoite migration through the hemolymph to salivary glands in the mosquito vector and in the host dermis.</text>
</comment>
<comment type="domain">
    <text evidence="3">The GPI-anchor is essential for cell membrane localization and for sporozoite formation inside the oocyst.</text>
</comment>
<comment type="PTM">
    <text evidence="1 3">During host cell invasion, proteolytically cleaved at the cell membrane in the region I by a papain-like cysteine protease of parasite origin (By similarity). Cleavage is triggered by the sporozoite contact with highly sulfated heparan sulfate proteoglycans (HSPGs) present on the host hepatocyte cell surface (By similarity). Cleavage exposes the TSP type-1 (TSR) domain and is required for productive invasion of host hepatocytes but not for adhesion to the host cell membrane (By similarity). Cleavage is dispensable for sporozoite development in the oocyst, motility and for traversal of host and vector cells (By similarity).</text>
</comment>
<comment type="PTM">
    <text evidence="2">O-glycosylated; maybe by POFUT2.</text>
</comment>
<comment type="polymorphism">
    <text evidence="8">The sequence of the repeats varies across Plasmodium species and strains.</text>
</comment>
<comment type="similarity">
    <text evidence="10">Belongs to the plasmodium circumsporozoite protein family.</text>
</comment>
<protein>
    <recommendedName>
        <fullName evidence="9">Circumsporozoite protein</fullName>
        <shortName evidence="9">CS</shortName>
    </recommendedName>
    <component>
        <recommendedName>
            <fullName evidence="10">Circumsporozoite protein C-terminus</fullName>
        </recommendedName>
    </component>
</protein>
<feature type="signal peptide" evidence="5">
    <location>
        <begin position="1"/>
        <end position="22"/>
    </location>
</feature>
<feature type="chain" id="PRO_0000024524" description="Circumsporozoite protein" evidence="5">
    <location>
        <begin position="23"/>
        <end position="355"/>
    </location>
</feature>
<feature type="chain" id="PRO_0000455481" description="Circumsporozoite protein C-terminus" evidence="3">
    <location>
        <begin status="unknown"/>
        <end position="355"/>
    </location>
</feature>
<feature type="propeptide" id="PRO_0000455482" description="Removed in mature form" evidence="5">
    <location>
        <begin position="356"/>
        <end position="378"/>
    </location>
</feature>
<feature type="repeat" description="1-1" evidence="11">
    <location>
        <begin position="99"/>
        <end position="104"/>
    </location>
</feature>
<feature type="repeat" description="1-2" evidence="11">
    <location>
        <begin position="105"/>
        <end position="110"/>
    </location>
</feature>
<feature type="repeat" description="1-3" evidence="11">
    <location>
        <begin position="111"/>
        <end position="116"/>
    </location>
</feature>
<feature type="repeat" description="1-4" evidence="11">
    <location>
        <begin position="117"/>
        <end position="122"/>
    </location>
</feature>
<feature type="repeat" description="1-5" evidence="11">
    <location>
        <begin position="123"/>
        <end position="128"/>
    </location>
</feature>
<feature type="repeat" description="1-6" evidence="11">
    <location>
        <begin position="129"/>
        <end position="134"/>
    </location>
</feature>
<feature type="repeat" description="1-7" evidence="11">
    <location>
        <begin position="135"/>
        <end position="140"/>
    </location>
</feature>
<feature type="repeat" description="1-8" evidence="11">
    <location>
        <begin position="141"/>
        <end position="146"/>
    </location>
</feature>
<feature type="repeat" description="1-9" evidence="11">
    <location>
        <begin position="147"/>
        <end position="152"/>
    </location>
</feature>
<feature type="repeat" description="1-10" evidence="11">
    <location>
        <begin position="153"/>
        <end position="158"/>
    </location>
</feature>
<feature type="repeat" description="1-11" evidence="11">
    <location>
        <begin position="159"/>
        <end position="164"/>
    </location>
</feature>
<feature type="repeat" description="1-12" evidence="11">
    <location>
        <begin position="165"/>
        <end position="170"/>
    </location>
</feature>
<feature type="repeat" description="1-13" evidence="11">
    <location>
        <begin position="171"/>
        <end position="176"/>
    </location>
</feature>
<feature type="repeat" description="1-14" evidence="11">
    <location>
        <begin position="177"/>
        <end position="182"/>
    </location>
</feature>
<feature type="repeat" description="1-15" evidence="11">
    <location>
        <begin position="183"/>
        <end position="188"/>
    </location>
</feature>
<feature type="repeat" description="1-16" evidence="11">
    <location>
        <begin position="189"/>
        <end position="194"/>
    </location>
</feature>
<feature type="repeat" description="1-17" evidence="11">
    <location>
        <begin position="195"/>
        <end position="200"/>
    </location>
</feature>
<feature type="repeat" description="1-18" evidence="11">
    <location>
        <begin position="201"/>
        <end position="206"/>
    </location>
</feature>
<feature type="repeat" description="2-1" evidence="11">
    <location>
        <begin position="212"/>
        <end position="222"/>
    </location>
</feature>
<feature type="repeat" description="2-2" evidence="11">
    <location>
        <begin position="223"/>
        <end position="233"/>
    </location>
</feature>
<feature type="repeat" description="2-3" evidence="11">
    <location>
        <begin position="234"/>
        <end position="244"/>
    </location>
</feature>
<feature type="repeat" description="2-4" evidence="11">
    <location>
        <begin position="245"/>
        <end position="255"/>
    </location>
</feature>
<feature type="repeat" description="2-5" evidence="11">
    <location>
        <begin position="256"/>
        <end position="266"/>
    </location>
</feature>
<feature type="repeat" description="2-6" evidence="11">
    <location>
        <begin position="267"/>
        <end position="277"/>
    </location>
</feature>
<feature type="domain" description="TSP type-1" evidence="6">
    <location>
        <begin position="304"/>
        <end position="356"/>
    </location>
</feature>
<feature type="region of interest" description="Disordered" evidence="7">
    <location>
        <begin position="50"/>
        <end position="291"/>
    </location>
</feature>
<feature type="region of interest" description="Required for the binding to heparan sulfate proteoglycans (HSPGs) on the surface of host hepatocytes" evidence="4">
    <location>
        <begin position="80"/>
        <end position="88"/>
    </location>
</feature>
<feature type="region of interest" description="Region I; contains the proteolytic cleavage site" evidence="3">
    <location>
        <begin position="91"/>
        <end position="95"/>
    </location>
</feature>
<feature type="region of interest" description="18 X 6 AA tandem repeats of D-G-A-R-A-[EA]" evidence="11">
    <location>
        <begin position="99"/>
        <end position="206"/>
    </location>
</feature>
<feature type="region of interest" description="6 X 11 AA tandem repeats of G-N-[QR]-[AE]-G-G-Q-A-G-A-G" evidence="11">
    <location>
        <begin position="212"/>
        <end position="277"/>
    </location>
</feature>
<feature type="compositionally biased region" description="Basic and acidic residues" evidence="7">
    <location>
        <begin position="66"/>
        <end position="92"/>
    </location>
</feature>
<feature type="compositionally biased region" description="Basic and acidic residues" evidence="7">
    <location>
        <begin position="101"/>
        <end position="126"/>
    </location>
</feature>
<feature type="compositionally biased region" description="Low complexity" evidence="7">
    <location>
        <begin position="127"/>
        <end position="140"/>
    </location>
</feature>
<feature type="compositionally biased region" description="Basic and acidic residues" evidence="7">
    <location>
        <begin position="141"/>
        <end position="162"/>
    </location>
</feature>
<feature type="compositionally biased region" description="Low complexity" evidence="7">
    <location>
        <begin position="163"/>
        <end position="200"/>
    </location>
</feature>
<feature type="compositionally biased region" description="Gly residues" evidence="7">
    <location>
        <begin position="214"/>
        <end position="283"/>
    </location>
</feature>
<feature type="lipid moiety-binding region" description="GPI-anchor amidated cysteine" evidence="5">
    <location>
        <position position="355"/>
    </location>
</feature>
<feature type="glycosylation site" description="O-linked (Fuc) threonine" evidence="2">
    <location>
        <position position="319"/>
    </location>
</feature>
<feature type="disulfide bond" evidence="4">
    <location>
        <begin position="316"/>
        <end position="350"/>
    </location>
</feature>
<feature type="disulfide bond" evidence="4">
    <location>
        <begin position="320"/>
        <end position="355"/>
    </location>
</feature>